<keyword id="KW-0067">ATP-binding</keyword>
<keyword id="KW-0131">Cell cycle</keyword>
<keyword id="KW-0132">Cell division</keyword>
<keyword id="KW-0133">Cell shape</keyword>
<keyword id="KW-0961">Cell wall biogenesis/degradation</keyword>
<keyword id="KW-0963">Cytoplasm</keyword>
<keyword id="KW-0436">Ligase</keyword>
<keyword id="KW-0547">Nucleotide-binding</keyword>
<keyword id="KW-0573">Peptidoglycan synthesis</keyword>
<dbReference type="EC" id="6.3.2.8" evidence="1"/>
<dbReference type="EMBL" id="CP000538">
    <property type="protein sequence ID" value="EAQ72192.1"/>
    <property type="molecule type" value="Genomic_DNA"/>
</dbReference>
<dbReference type="SMR" id="A1W043"/>
<dbReference type="KEGG" id="cjj:CJJ81176_1074"/>
<dbReference type="eggNOG" id="COG0773">
    <property type="taxonomic scope" value="Bacteria"/>
</dbReference>
<dbReference type="HOGENOM" id="CLU_028104_2_2_7"/>
<dbReference type="UniPathway" id="UPA00219"/>
<dbReference type="Proteomes" id="UP000000646">
    <property type="component" value="Chromosome"/>
</dbReference>
<dbReference type="GO" id="GO:0005737">
    <property type="term" value="C:cytoplasm"/>
    <property type="evidence" value="ECO:0007669"/>
    <property type="project" value="UniProtKB-SubCell"/>
</dbReference>
<dbReference type="GO" id="GO:0005524">
    <property type="term" value="F:ATP binding"/>
    <property type="evidence" value="ECO:0007669"/>
    <property type="project" value="UniProtKB-UniRule"/>
</dbReference>
<dbReference type="GO" id="GO:0008763">
    <property type="term" value="F:UDP-N-acetylmuramate-L-alanine ligase activity"/>
    <property type="evidence" value="ECO:0007669"/>
    <property type="project" value="UniProtKB-UniRule"/>
</dbReference>
<dbReference type="GO" id="GO:0051301">
    <property type="term" value="P:cell division"/>
    <property type="evidence" value="ECO:0007669"/>
    <property type="project" value="UniProtKB-KW"/>
</dbReference>
<dbReference type="GO" id="GO:0071555">
    <property type="term" value="P:cell wall organization"/>
    <property type="evidence" value="ECO:0007669"/>
    <property type="project" value="UniProtKB-KW"/>
</dbReference>
<dbReference type="GO" id="GO:0009252">
    <property type="term" value="P:peptidoglycan biosynthetic process"/>
    <property type="evidence" value="ECO:0007669"/>
    <property type="project" value="UniProtKB-UniRule"/>
</dbReference>
<dbReference type="GO" id="GO:0008360">
    <property type="term" value="P:regulation of cell shape"/>
    <property type="evidence" value="ECO:0007669"/>
    <property type="project" value="UniProtKB-KW"/>
</dbReference>
<dbReference type="Gene3D" id="3.90.190.20">
    <property type="entry name" value="Mur ligase, C-terminal domain"/>
    <property type="match status" value="1"/>
</dbReference>
<dbReference type="Gene3D" id="3.40.1190.10">
    <property type="entry name" value="Mur-like, catalytic domain"/>
    <property type="match status" value="1"/>
</dbReference>
<dbReference type="Gene3D" id="3.40.50.720">
    <property type="entry name" value="NAD(P)-binding Rossmann-like Domain"/>
    <property type="match status" value="1"/>
</dbReference>
<dbReference type="HAMAP" id="MF_00046">
    <property type="entry name" value="MurC"/>
    <property type="match status" value="1"/>
</dbReference>
<dbReference type="InterPro" id="IPR036565">
    <property type="entry name" value="Mur-like_cat_sf"/>
</dbReference>
<dbReference type="InterPro" id="IPR004101">
    <property type="entry name" value="Mur_ligase_C"/>
</dbReference>
<dbReference type="InterPro" id="IPR036615">
    <property type="entry name" value="Mur_ligase_C_dom_sf"/>
</dbReference>
<dbReference type="InterPro" id="IPR013221">
    <property type="entry name" value="Mur_ligase_cen"/>
</dbReference>
<dbReference type="InterPro" id="IPR000713">
    <property type="entry name" value="Mur_ligase_N"/>
</dbReference>
<dbReference type="InterPro" id="IPR050061">
    <property type="entry name" value="MurCDEF_pg_biosynth"/>
</dbReference>
<dbReference type="InterPro" id="IPR005758">
    <property type="entry name" value="UDP-N-AcMur_Ala_ligase_MurC"/>
</dbReference>
<dbReference type="NCBIfam" id="TIGR01082">
    <property type="entry name" value="murC"/>
    <property type="match status" value="1"/>
</dbReference>
<dbReference type="PANTHER" id="PTHR43445:SF3">
    <property type="entry name" value="UDP-N-ACETYLMURAMATE--L-ALANINE LIGASE"/>
    <property type="match status" value="1"/>
</dbReference>
<dbReference type="PANTHER" id="PTHR43445">
    <property type="entry name" value="UDP-N-ACETYLMURAMATE--L-ALANINE LIGASE-RELATED"/>
    <property type="match status" value="1"/>
</dbReference>
<dbReference type="Pfam" id="PF01225">
    <property type="entry name" value="Mur_ligase"/>
    <property type="match status" value="1"/>
</dbReference>
<dbReference type="Pfam" id="PF02875">
    <property type="entry name" value="Mur_ligase_C"/>
    <property type="match status" value="1"/>
</dbReference>
<dbReference type="Pfam" id="PF08245">
    <property type="entry name" value="Mur_ligase_M"/>
    <property type="match status" value="1"/>
</dbReference>
<dbReference type="SUPFAM" id="SSF51984">
    <property type="entry name" value="MurCD N-terminal domain"/>
    <property type="match status" value="1"/>
</dbReference>
<dbReference type="SUPFAM" id="SSF53623">
    <property type="entry name" value="MurD-like peptide ligases, catalytic domain"/>
    <property type="match status" value="1"/>
</dbReference>
<dbReference type="SUPFAM" id="SSF53244">
    <property type="entry name" value="MurD-like peptide ligases, peptide-binding domain"/>
    <property type="match status" value="1"/>
</dbReference>
<gene>
    <name evidence="1" type="primary">murC</name>
    <name type="ordered locus">CJJ81176_1074</name>
</gene>
<sequence length="431" mass="48212">MQNIHFIGIGGIGISALARFLKEKGFKISGSDLKESKITKELEKEGVKVSIPHHKDNILNKDLVIYSAAIKEENPEFKYAKELGIKCLSRKEALPLILEDKRVFAVAGAHGKSTTSSILASLLDDASVIIGAILKEFGSNMIYKESQNLVFEADESDSSFLNSNPYLAIVTNAEAEHLDHYGNEVSKLHHAYTQFLDVAKIRVINAEDEFLKNYKNESIKLYPSKDIKNCTMCIENFKPFTSFELKDLGEFKVFGMGYHLALDASLAILAALNFLDIETIRTRLKNYQGIKKRFDILHADENLVLIDDYGHHPTEIKATLSAAQEYVKLGGYKKITAIFEPHRYTRLATNLKEFAKAFEGVDELVILPVYAAGEEPIELDLKAVFPKALFVEDIKREGKFLVASKGQVFEEGLIIGFGAGDISNKLRQKNE</sequence>
<protein>
    <recommendedName>
        <fullName evidence="1">UDP-N-acetylmuramate--L-alanine ligase</fullName>
        <ecNumber evidence="1">6.3.2.8</ecNumber>
    </recommendedName>
    <alternativeName>
        <fullName evidence="1">UDP-N-acetylmuramoyl-L-alanine synthetase</fullName>
    </alternativeName>
</protein>
<accession>A1W043</accession>
<proteinExistence type="inferred from homology"/>
<reference key="1">
    <citation type="submission" date="2006-12" db="EMBL/GenBank/DDBJ databases">
        <authorList>
            <person name="Fouts D.E."/>
            <person name="Nelson K.E."/>
            <person name="Sebastian Y."/>
        </authorList>
    </citation>
    <scope>NUCLEOTIDE SEQUENCE [LARGE SCALE GENOMIC DNA]</scope>
    <source>
        <strain>81-176</strain>
    </source>
</reference>
<organism>
    <name type="scientific">Campylobacter jejuni subsp. jejuni serotype O:23/36 (strain 81-176)</name>
    <dbReference type="NCBI Taxonomy" id="354242"/>
    <lineage>
        <taxon>Bacteria</taxon>
        <taxon>Pseudomonadati</taxon>
        <taxon>Campylobacterota</taxon>
        <taxon>Epsilonproteobacteria</taxon>
        <taxon>Campylobacterales</taxon>
        <taxon>Campylobacteraceae</taxon>
        <taxon>Campylobacter</taxon>
    </lineage>
</organism>
<feature type="chain" id="PRO_0000336819" description="UDP-N-acetylmuramate--L-alanine ligase">
    <location>
        <begin position="1"/>
        <end position="431"/>
    </location>
</feature>
<feature type="binding site" evidence="1">
    <location>
        <begin position="108"/>
        <end position="114"/>
    </location>
    <ligand>
        <name>ATP</name>
        <dbReference type="ChEBI" id="CHEBI:30616"/>
    </ligand>
</feature>
<evidence type="ECO:0000255" key="1">
    <source>
        <dbReference type="HAMAP-Rule" id="MF_00046"/>
    </source>
</evidence>
<comment type="function">
    <text evidence="1">Cell wall formation.</text>
</comment>
<comment type="catalytic activity">
    <reaction evidence="1">
        <text>UDP-N-acetyl-alpha-D-muramate + L-alanine + ATP = UDP-N-acetyl-alpha-D-muramoyl-L-alanine + ADP + phosphate + H(+)</text>
        <dbReference type="Rhea" id="RHEA:23372"/>
        <dbReference type="ChEBI" id="CHEBI:15378"/>
        <dbReference type="ChEBI" id="CHEBI:30616"/>
        <dbReference type="ChEBI" id="CHEBI:43474"/>
        <dbReference type="ChEBI" id="CHEBI:57972"/>
        <dbReference type="ChEBI" id="CHEBI:70757"/>
        <dbReference type="ChEBI" id="CHEBI:83898"/>
        <dbReference type="ChEBI" id="CHEBI:456216"/>
        <dbReference type="EC" id="6.3.2.8"/>
    </reaction>
</comment>
<comment type="pathway">
    <text evidence="1">Cell wall biogenesis; peptidoglycan biosynthesis.</text>
</comment>
<comment type="subcellular location">
    <subcellularLocation>
        <location evidence="1">Cytoplasm</location>
    </subcellularLocation>
</comment>
<comment type="similarity">
    <text evidence="1">Belongs to the MurCDEF family.</text>
</comment>
<name>MURC_CAMJJ</name>